<protein>
    <recommendedName>
        <fullName>Host range factor p28</fullName>
        <ecNumber>2.3.2.27</ecNumber>
    </recommendedName>
    <alternativeName>
        <fullName>E3 ubiquitin-protein ligase p28</fullName>
    </alternativeName>
    <alternativeName>
        <fullName>Protein D5R</fullName>
    </alternativeName>
</protein>
<sequence>MEFDPVKINTSSIDHVTILQYIDEPNDIRLTVCIIRNINNITYYINITKINPHLANRFRAWKKRIAGRDYMTNLSRDTGIQQSKLTETIRNCQKNKNIYGLYIHYNLVINVVIDWITDVIVQSILRGLVNWYIANNTYTPNTPNNTTTISELDIIKILDKYEDMYRVSKEKECGICYEVVYSKRLENDRYFGLLDSCNHIFCITCINIWHRTRRETGALDNCPICRTRFRKITMSKFYKLVN</sequence>
<proteinExistence type="inferred from homology"/>
<gene>
    <name type="primary">OPG021</name>
    <name type="synonym">p28</name>
    <name type="ORF">D5R</name>
</gene>
<accession>Q8V571</accession>
<organismHost>
    <name type="scientific">Cynomys gunnisoni</name>
    <name type="common">Gunnison's prairie dog</name>
    <name type="synonym">Spermophilus gunnisoni</name>
    <dbReference type="NCBI Taxonomy" id="45479"/>
</organismHost>
<organismHost>
    <name type="scientific">Cynomys leucurus</name>
    <name type="common">White-tailed prairie dog</name>
    <dbReference type="NCBI Taxonomy" id="99825"/>
</organismHost>
<organismHost>
    <name type="scientific">Cynomys ludovicianus</name>
    <name type="common">Black-tailed prairie dog</name>
    <dbReference type="NCBI Taxonomy" id="45480"/>
</organismHost>
<organismHost>
    <name type="scientific">Cynomys mexicanus</name>
    <name type="common">Mexican prairie dog</name>
    <dbReference type="NCBI Taxonomy" id="99826"/>
</organismHost>
<organismHost>
    <name type="scientific">Cynomys parvidens</name>
    <name type="common">Utah prairie dog</name>
    <dbReference type="NCBI Taxonomy" id="99827"/>
</organismHost>
<organismHost>
    <name type="scientific">Gliridae</name>
    <name type="common">dormice</name>
    <dbReference type="NCBI Taxonomy" id="30650"/>
</organismHost>
<organismHost>
    <name type="scientific">Heliosciurus ruwenzorii</name>
    <name type="common">Ruwenzori sun squirrel</name>
    <dbReference type="NCBI Taxonomy" id="226685"/>
</organismHost>
<organismHost>
    <name type="scientific">Homo sapiens</name>
    <name type="common">Human</name>
    <dbReference type="NCBI Taxonomy" id="9606"/>
</organismHost>
<organismHost>
    <name type="scientific">Mus musculus</name>
    <name type="common">Mouse</name>
    <dbReference type="NCBI Taxonomy" id="10090"/>
</organismHost>
<organism>
    <name type="scientific">Monkeypox virus (strain Zaire-96-I-16)</name>
    <name type="common">MPX</name>
    <dbReference type="NCBI Taxonomy" id="619591"/>
    <lineage>
        <taxon>Viruses</taxon>
        <taxon>Varidnaviria</taxon>
        <taxon>Bamfordvirae</taxon>
        <taxon>Nucleocytoviricota</taxon>
        <taxon>Pokkesviricetes</taxon>
        <taxon>Chitovirales</taxon>
        <taxon>Poxviridae</taxon>
        <taxon>Chordopoxvirinae</taxon>
        <taxon>Orthopoxvirus</taxon>
        <taxon>Monkeypox virus</taxon>
    </lineage>
</organism>
<keyword id="KW-1035">Host cytoplasm</keyword>
<keyword id="KW-0945">Host-virus interaction</keyword>
<keyword id="KW-0479">Metal-binding</keyword>
<keyword id="KW-1119">Modulation of host cell apoptosis by virus</keyword>
<keyword id="KW-1128">Modulation of host ubiquitin pathway by viral E3 ligase</keyword>
<keyword id="KW-1130">Modulation of host ubiquitin pathway by virus</keyword>
<keyword id="KW-0808">Transferase</keyword>
<keyword id="KW-0833">Ubl conjugation pathway</keyword>
<keyword id="KW-0862">Zinc</keyword>
<keyword id="KW-0863">Zinc-finger</keyword>
<name>PG021_MONPZ</name>
<reference key="1">
    <citation type="journal article" date="2001" name="FEBS Lett.">
        <title>Human monkeypox and smallpox viruses: genomic comparison.</title>
        <authorList>
            <person name="Shchelkunov S.N."/>
            <person name="Totmenin A.V."/>
            <person name="Babkin I.V."/>
            <person name="Safronov P.F."/>
            <person name="Ryazankina O.I."/>
            <person name="Petrov N.A."/>
            <person name="Gutorov V.V."/>
            <person name="Uvarova E.A."/>
            <person name="Mikheev M.V."/>
            <person name="Sisler J.R."/>
            <person name="Esposito J.J."/>
            <person name="Jahrling P.B."/>
            <person name="Moss B."/>
            <person name="Sandakhchiev L.S."/>
        </authorList>
    </citation>
    <scope>NUCLEOTIDE SEQUENCE [LARGE SCALE GENOMIC DNA]</scope>
    <source>
        <strain>Zaire-96-I-16</strain>
    </source>
</reference>
<evidence type="ECO:0000250" key="1">
    <source>
        <dbReference type="UniProtKB" id="Q85318"/>
    </source>
</evidence>
<evidence type="ECO:0000255" key="2">
    <source>
        <dbReference type="PROSITE-ProRule" id="PRU00175"/>
    </source>
</evidence>
<evidence type="ECO:0000255" key="3">
    <source>
        <dbReference type="PROSITE-ProRule" id="PRU00631"/>
    </source>
</evidence>
<evidence type="ECO:0000305" key="4"/>
<comment type="function">
    <text evidence="1">RING-finger E3 ubiquitin ligase which catalyzes the formation of both 'Lys-48'- and 'Lys-63'-linked polyubiquitin chains. Plays an important role in virulence by acting as an anti-apoptotic factor.</text>
</comment>
<comment type="catalytic activity">
    <reaction>
        <text>S-ubiquitinyl-[E2 ubiquitin-conjugating enzyme]-L-cysteine + [acceptor protein]-L-lysine = [E2 ubiquitin-conjugating enzyme]-L-cysteine + N(6)-ubiquitinyl-[acceptor protein]-L-lysine.</text>
        <dbReference type="EC" id="2.3.2.27"/>
    </reaction>
</comment>
<comment type="subcellular location">
    <subcellularLocation>
        <location>Host cytoplasm</location>
    </subcellularLocation>
    <text evidence="1">Localizes to viral factories, the sites of virus replication.</text>
</comment>
<comment type="similarity">
    <text evidence="4">Belongs to the orthopoxvirus OPG021 family.</text>
</comment>
<dbReference type="EC" id="2.3.2.27"/>
<dbReference type="EMBL" id="AF380138">
    <property type="protein sequence ID" value="AAL40466.1"/>
    <property type="molecule type" value="Genomic_DNA"/>
</dbReference>
<dbReference type="RefSeq" id="NP_536435.1">
    <property type="nucleotide sequence ID" value="NC_003310.1"/>
</dbReference>
<dbReference type="GeneID" id="928906"/>
<dbReference type="KEGG" id="vg:928906"/>
<dbReference type="Proteomes" id="UP000101269">
    <property type="component" value="Genome"/>
</dbReference>
<dbReference type="GO" id="GO:0030430">
    <property type="term" value="C:host cell cytoplasm"/>
    <property type="evidence" value="ECO:0007669"/>
    <property type="project" value="UniProtKB-SubCell"/>
</dbReference>
<dbReference type="GO" id="GO:0016881">
    <property type="term" value="F:acid-amino acid ligase activity"/>
    <property type="evidence" value="ECO:0007669"/>
    <property type="project" value="InterPro"/>
</dbReference>
<dbReference type="GO" id="GO:0061630">
    <property type="term" value="F:ubiquitin protein ligase activity"/>
    <property type="evidence" value="ECO:0007669"/>
    <property type="project" value="InterPro"/>
</dbReference>
<dbReference type="GO" id="GO:0008270">
    <property type="term" value="F:zinc ion binding"/>
    <property type="evidence" value="ECO:0007669"/>
    <property type="project" value="UniProtKB-KW"/>
</dbReference>
<dbReference type="GO" id="GO:0000209">
    <property type="term" value="P:protein polyubiquitination"/>
    <property type="evidence" value="ECO:0007669"/>
    <property type="project" value="InterPro"/>
</dbReference>
<dbReference type="GO" id="GO:0052150">
    <property type="term" value="P:symbiont-mediated perturbation of host apoptosis"/>
    <property type="evidence" value="ECO:0007669"/>
    <property type="project" value="UniProtKB-KW"/>
</dbReference>
<dbReference type="GO" id="GO:0039648">
    <property type="term" value="P:symbiont-mediated perturbation of host ubiquitin-like protein modification"/>
    <property type="evidence" value="ECO:0007669"/>
    <property type="project" value="UniProtKB-KW"/>
</dbReference>
<dbReference type="Gene3D" id="3.30.40.10">
    <property type="entry name" value="Zinc/RING finger domain, C3HC4 (zinc finger)"/>
    <property type="match status" value="1"/>
</dbReference>
<dbReference type="InterPro" id="IPR016398">
    <property type="entry name" value="E3_ubiquitin-prot_ligase_p28"/>
</dbReference>
<dbReference type="InterPro" id="IPR018004">
    <property type="entry name" value="KilA/APSES_HTH"/>
</dbReference>
<dbReference type="InterPro" id="IPR017880">
    <property type="entry name" value="KilA_N"/>
</dbReference>
<dbReference type="InterPro" id="IPR045072">
    <property type="entry name" value="MKRN-like"/>
</dbReference>
<dbReference type="InterPro" id="IPR001841">
    <property type="entry name" value="Znf_RING"/>
</dbReference>
<dbReference type="InterPro" id="IPR013083">
    <property type="entry name" value="Znf_RING/FYVE/PHD"/>
</dbReference>
<dbReference type="InterPro" id="IPR017907">
    <property type="entry name" value="Znf_RING_CS"/>
</dbReference>
<dbReference type="PANTHER" id="PTHR11224:SF10">
    <property type="entry name" value="IP09428P-RELATED"/>
    <property type="match status" value="1"/>
</dbReference>
<dbReference type="PANTHER" id="PTHR11224">
    <property type="entry name" value="MAKORIN-RELATED"/>
    <property type="match status" value="1"/>
</dbReference>
<dbReference type="Pfam" id="PF04383">
    <property type="entry name" value="KilA-N"/>
    <property type="match status" value="1"/>
</dbReference>
<dbReference type="Pfam" id="PF13639">
    <property type="entry name" value="zf-RING_2"/>
    <property type="match status" value="1"/>
</dbReference>
<dbReference type="PIRSF" id="PIRSF003775">
    <property type="entry name" value="E3_ubiquit_lig_p28"/>
    <property type="match status" value="1"/>
</dbReference>
<dbReference type="SMART" id="SM00184">
    <property type="entry name" value="RING"/>
    <property type="match status" value="1"/>
</dbReference>
<dbReference type="SUPFAM" id="SSF57850">
    <property type="entry name" value="RING/U-box"/>
    <property type="match status" value="1"/>
</dbReference>
<dbReference type="PROSITE" id="PS51301">
    <property type="entry name" value="KILA_N"/>
    <property type="match status" value="1"/>
</dbReference>
<dbReference type="PROSITE" id="PS00518">
    <property type="entry name" value="ZF_RING_1"/>
    <property type="match status" value="1"/>
</dbReference>
<dbReference type="PROSITE" id="PS50089">
    <property type="entry name" value="ZF_RING_2"/>
    <property type="match status" value="1"/>
</dbReference>
<feature type="chain" id="PRO_0000395988" description="Host range factor p28">
    <location>
        <begin position="1"/>
        <end position="242"/>
    </location>
</feature>
<feature type="domain" description="KilA-N" evidence="3">
    <location>
        <begin position="21"/>
        <end position="131"/>
    </location>
</feature>
<feature type="zinc finger region" description="RING-type" evidence="2">
    <location>
        <begin position="173"/>
        <end position="226"/>
    </location>
</feature>